<keyword id="KW-0349">Heme</keyword>
<keyword id="KW-0408">Iron</keyword>
<keyword id="KW-0472">Membrane</keyword>
<keyword id="KW-0479">Metal-binding</keyword>
<keyword id="KW-0503">Monooxygenase</keyword>
<keyword id="KW-0560">Oxidoreductase</keyword>
<keyword id="KW-0812">Transmembrane</keyword>
<keyword id="KW-1133">Transmembrane helix</keyword>
<proteinExistence type="inferred from homology"/>
<protein>
    <recommendedName>
        <fullName evidence="4">Cytochrome P450 monooxygenase PC-20</fullName>
        <ecNumber evidence="6">1.-.-.-</ecNumber>
    </recommendedName>
    <alternativeName>
        <fullName evidence="4">Penitrem biosynthesis cluster protein PC-20</fullName>
    </alternativeName>
</protein>
<feature type="chain" id="PRO_0000446585" description="Cytochrome P450 monooxygenase PC-20">
    <location>
        <begin position="1"/>
        <end position="453"/>
    </location>
</feature>
<feature type="transmembrane region" description="Helical" evidence="2">
    <location>
        <begin position="5"/>
        <end position="25"/>
    </location>
</feature>
<feature type="transmembrane region" description="Helical" evidence="2">
    <location>
        <begin position="49"/>
        <end position="69"/>
    </location>
</feature>
<feature type="binding site" description="axial binding residue" evidence="1">
    <location>
        <position position="387"/>
    </location>
    <ligand>
        <name>heme</name>
        <dbReference type="ChEBI" id="CHEBI:30413"/>
    </ligand>
    <ligandPart>
        <name>Fe</name>
        <dbReference type="ChEBI" id="CHEBI:18248"/>
    </ligandPart>
</feature>
<comment type="function">
    <text evidence="3 6">Cytochrome P450 monooxygenase; part of the gene cluster that mediates the biosynthesis of the indole diterpenes penitrems (PubMed:26213965). The geranylgeranyl diphosphate (GGPP) synthase penG catalyzes the first step in penitrem biosynthesis via conversion of farnesyl pyrophosphate and isopentyl pyrophosphate into geranylgeranyl pyrophosphate (GGPP) (Probable). Condensation of indole-3-glycerol phosphate with GGPP by the prenyl transferase penC then forms 3-geranylgeranylindole (3-GGI) (Probable). Epoxidation by the FAD-dependent monooxygenase penM leads to a epoxidized-GGI that is substrate of the terpene cyclase penB for cyclization to yield paspaline (Probable). Paspaline is subsequently converted to 13-desoxypaxilline by the cytochrome P450 monooxygenase penP, the latter being then converted to paxilline by the cytochrome P450 monooxygenase penQ (PubMed:26213965). Paxilline is converted to beta-paxitriol via C-10 ketoreduction by the short-chain dehydrogenase PC-15 which can be monoprenylated at the C-20 by the indole diterpene prenyltransferase penD (Probable). A two-step elimination (acetylation and elimination) process performed by the O-acetyltransferase PC-16 and the P.simplicissimum ptmI-ortholog not yet identified in P.crustosum, leads to the production of the prenylated form of penijanthine (Probable). The FAD-linked oxidoreductase ptmO then converts the prenylated form of penijanthine into PC-M5 which is in turn transformed into PC-M4 by the aromatic dimethylallyltransferase PC-22 (Probable). A series of oxidation steps involving 4 cytochrome P450 monooxygenases (PC-21, PC-05, PC-23, PC-20) and a FAD-dependent monooxygenase (PC-14) are required for the transformation of PC-M4 to penitrems A and E. Synthesis of these final products is proposed to proceed via penitrems D and C (PC-21, PC-05, PC-14) and penitrems B and F (PC-21, PC-05, PC-14, PC-23) (Probable).</text>
</comment>
<comment type="cofactor">
    <cofactor evidence="1">
        <name>heme</name>
        <dbReference type="ChEBI" id="CHEBI:30413"/>
    </cofactor>
</comment>
<comment type="pathway">
    <text evidence="6">Secondary metabolite biosynthesis.</text>
</comment>
<comment type="subcellular location">
    <subcellularLocation>
        <location evidence="2">Membrane</location>
        <topology evidence="2">Multi-pass membrane protein</topology>
    </subcellularLocation>
</comment>
<comment type="similarity">
    <text evidence="5">Belongs to the cytochrome P450 family.</text>
</comment>
<name>PC20_PENCR</name>
<organism>
    <name type="scientific">Penicillium crustosum</name>
    <name type="common">Blue mold fungus</name>
    <dbReference type="NCBI Taxonomy" id="36656"/>
    <lineage>
        <taxon>Eukaryota</taxon>
        <taxon>Fungi</taxon>
        <taxon>Dikarya</taxon>
        <taxon>Ascomycota</taxon>
        <taxon>Pezizomycotina</taxon>
        <taxon>Eurotiomycetes</taxon>
        <taxon>Eurotiomycetidae</taxon>
        <taxon>Eurotiales</taxon>
        <taxon>Aspergillaceae</taxon>
        <taxon>Penicillium</taxon>
    </lineage>
</organism>
<evidence type="ECO:0000250" key="1">
    <source>
        <dbReference type="UniProtKB" id="P04798"/>
    </source>
</evidence>
<evidence type="ECO:0000255" key="2"/>
<evidence type="ECO:0000269" key="3">
    <source>
    </source>
</evidence>
<evidence type="ECO:0000303" key="4">
    <source>
    </source>
</evidence>
<evidence type="ECO:0000305" key="5"/>
<evidence type="ECO:0000305" key="6">
    <source>
    </source>
</evidence>
<dbReference type="EC" id="1.-.-.-" evidence="6"/>
<dbReference type="EMBL" id="KC963408">
    <property type="protein sequence ID" value="AGZ20200.1"/>
    <property type="molecule type" value="Genomic_DNA"/>
</dbReference>
<dbReference type="SMR" id="A0A0E3D8M6"/>
<dbReference type="GO" id="GO:0016020">
    <property type="term" value="C:membrane"/>
    <property type="evidence" value="ECO:0007669"/>
    <property type="project" value="UniProtKB-SubCell"/>
</dbReference>
<dbReference type="GO" id="GO:0020037">
    <property type="term" value="F:heme binding"/>
    <property type="evidence" value="ECO:0007669"/>
    <property type="project" value="InterPro"/>
</dbReference>
<dbReference type="GO" id="GO:0005506">
    <property type="term" value="F:iron ion binding"/>
    <property type="evidence" value="ECO:0007669"/>
    <property type="project" value="InterPro"/>
</dbReference>
<dbReference type="GO" id="GO:0004497">
    <property type="term" value="F:monooxygenase activity"/>
    <property type="evidence" value="ECO:0007669"/>
    <property type="project" value="UniProtKB-KW"/>
</dbReference>
<dbReference type="GO" id="GO:0016705">
    <property type="term" value="F:oxidoreductase activity, acting on paired donors, with incorporation or reduction of molecular oxygen"/>
    <property type="evidence" value="ECO:0007669"/>
    <property type="project" value="InterPro"/>
</dbReference>
<dbReference type="GO" id="GO:0043386">
    <property type="term" value="P:mycotoxin biosynthetic process"/>
    <property type="evidence" value="ECO:0007669"/>
    <property type="project" value="UniProtKB-ARBA"/>
</dbReference>
<dbReference type="Gene3D" id="1.10.630.10">
    <property type="entry name" value="Cytochrome P450"/>
    <property type="match status" value="2"/>
</dbReference>
<dbReference type="InterPro" id="IPR001128">
    <property type="entry name" value="Cyt_P450"/>
</dbReference>
<dbReference type="InterPro" id="IPR002401">
    <property type="entry name" value="Cyt_P450_E_grp-I"/>
</dbReference>
<dbReference type="InterPro" id="IPR036396">
    <property type="entry name" value="Cyt_P450_sf"/>
</dbReference>
<dbReference type="InterPro" id="IPR050121">
    <property type="entry name" value="Cytochrome_P450_monoxygenase"/>
</dbReference>
<dbReference type="PANTHER" id="PTHR24305">
    <property type="entry name" value="CYTOCHROME P450"/>
    <property type="match status" value="1"/>
</dbReference>
<dbReference type="PANTHER" id="PTHR24305:SF107">
    <property type="entry name" value="P450, PUTATIVE (EUROFUNG)-RELATED"/>
    <property type="match status" value="1"/>
</dbReference>
<dbReference type="Pfam" id="PF00067">
    <property type="entry name" value="p450"/>
    <property type="match status" value="2"/>
</dbReference>
<dbReference type="PRINTS" id="PR00463">
    <property type="entry name" value="EP450I"/>
</dbReference>
<dbReference type="PRINTS" id="PR00385">
    <property type="entry name" value="P450"/>
</dbReference>
<dbReference type="SUPFAM" id="SSF48264">
    <property type="entry name" value="Cytochrome P450"/>
    <property type="match status" value="1"/>
</dbReference>
<gene>
    <name evidence="4" type="primary">PC-20</name>
</gene>
<reference key="1">
    <citation type="journal article" date="2015" name="Toxins">
        <title>Molecular cloning and functional analysis of gene clusters for the biosynthesis of indole-diterpenes in Penicillium crustosum and P. janthinellum.</title>
        <authorList>
            <person name="Nicholson M.J."/>
            <person name="Eaton C.J."/>
            <person name="Starkel C."/>
            <person name="Tapper B.A."/>
            <person name="Cox M.P."/>
            <person name="Scott B."/>
        </authorList>
    </citation>
    <scope>NUCLEOTIDE SEQUENCE [GENOMIC DNA]</scope>
    <scope>IDENTIFICATION</scope>
    <scope>FUNCTION</scope>
    <scope>PATHWAY</scope>
    <source>
        <strain>PN2402</strain>
    </source>
</reference>
<sequence>MRDSLGPFRTFTLLTVGLLLSLCVIKTVKHRRRYHRLPTPPHSMLLGNLGVVLAEILASPEGFFHLFCVENIRRKYNMPSVFYLDLWPILPSIMVVAEPAVAKHMTQVQPLQRERFSPNLFSPLLTAEFILAMEQKNWKKENPALNAALTSTRVNEATSLLAPSLHSLRSRLHSISQSGKQYPIKDLLISYIIEVGGVIQLGGSFDLLAETSALDPIIKRSLDMMGWNPVKRYIYSKEIKQRTDCLNKVLVETIQNTAQTGESGKMSQSPIYLAHYCYLFLHKHPDCLREMREEHDRVFSPDRTQTWELLQKEPHRINSLHFTLAVVKETLRLIGVGGAFICHLAMGRRADLFPDPDAFRPHRFLPGANPSIPADSFRPFEKGHLSCPGQNLALKSLVLLLLTTSREFDLVPVFPKGAPQAAEYLGGKGYPEFHIGPHVNKGMPVMVHTRVDA</sequence>
<accession>A0A0E3D8M6</accession>